<organism>
    <name type="scientific">Bacillus cereus (strain ATCC 10987 / NRS 248)</name>
    <dbReference type="NCBI Taxonomy" id="222523"/>
    <lineage>
        <taxon>Bacteria</taxon>
        <taxon>Bacillati</taxon>
        <taxon>Bacillota</taxon>
        <taxon>Bacilli</taxon>
        <taxon>Bacillales</taxon>
        <taxon>Bacillaceae</taxon>
        <taxon>Bacillus</taxon>
        <taxon>Bacillus cereus group</taxon>
    </lineage>
</organism>
<keyword id="KW-0963">Cytoplasm</keyword>
<keyword id="KW-0275">Fatty acid biosynthesis</keyword>
<keyword id="KW-0276">Fatty acid metabolism</keyword>
<keyword id="KW-0444">Lipid biosynthesis</keyword>
<keyword id="KW-0443">Lipid metabolism</keyword>
<keyword id="KW-0460">Magnesium</keyword>
<keyword id="KW-0479">Metal-binding</keyword>
<keyword id="KW-0808">Transferase</keyword>
<reference key="1">
    <citation type="journal article" date="2004" name="Nucleic Acids Res.">
        <title>The genome sequence of Bacillus cereus ATCC 10987 reveals metabolic adaptations and a large plasmid related to Bacillus anthracis pXO1.</title>
        <authorList>
            <person name="Rasko D.A."/>
            <person name="Ravel J."/>
            <person name="Oekstad O.A."/>
            <person name="Helgason E."/>
            <person name="Cer R.Z."/>
            <person name="Jiang L."/>
            <person name="Shores K.A."/>
            <person name="Fouts D.E."/>
            <person name="Tourasse N.J."/>
            <person name="Angiuoli S.V."/>
            <person name="Kolonay J.F."/>
            <person name="Nelson W.C."/>
            <person name="Kolstoe A.-B."/>
            <person name="Fraser C.M."/>
            <person name="Read T.D."/>
        </authorList>
    </citation>
    <scope>NUCLEOTIDE SEQUENCE [LARGE SCALE GENOMIC DNA]</scope>
    <source>
        <strain>ATCC 10987 / NRS 248</strain>
    </source>
</reference>
<feature type="chain" id="PRO_0000175607" description="Holo-[acyl-carrier-protein] synthase">
    <location>
        <begin position="1"/>
        <end position="119"/>
    </location>
</feature>
<feature type="binding site" evidence="1">
    <location>
        <position position="8"/>
    </location>
    <ligand>
        <name>Mg(2+)</name>
        <dbReference type="ChEBI" id="CHEBI:18420"/>
    </ligand>
</feature>
<feature type="binding site" evidence="1">
    <location>
        <position position="58"/>
    </location>
    <ligand>
        <name>Mg(2+)</name>
        <dbReference type="ChEBI" id="CHEBI:18420"/>
    </ligand>
</feature>
<protein>
    <recommendedName>
        <fullName evidence="1">Holo-[acyl-carrier-protein] synthase</fullName>
        <shortName evidence="1">Holo-ACP synthase</shortName>
        <ecNumber evidence="1">2.7.8.7</ecNumber>
    </recommendedName>
    <alternativeName>
        <fullName evidence="1">4'-phosphopantetheinyl transferase AcpS</fullName>
    </alternativeName>
</protein>
<gene>
    <name evidence="1" type="primary">acpS</name>
    <name type="ordered locus">BCE_0270</name>
</gene>
<sequence length="119" mass="13142">MIVGIGIDIIELNRIEKMIDGKLKFMERILTESERNVAKGLKGSRLTEFVAGRFAAKEAYSKAVGTGIGKEVSFLDIEVRNDDRGKPILITSTEHIVHLSISHSKEFAVAQVVLESSSR</sequence>
<evidence type="ECO:0000255" key="1">
    <source>
        <dbReference type="HAMAP-Rule" id="MF_00101"/>
    </source>
</evidence>
<name>ACPS_BACC1</name>
<dbReference type="EC" id="2.7.8.7" evidence="1"/>
<dbReference type="EMBL" id="AE017194">
    <property type="protein sequence ID" value="AAS39206.1"/>
    <property type="molecule type" value="Genomic_DNA"/>
</dbReference>
<dbReference type="SMR" id="Q73ET8"/>
<dbReference type="KEGG" id="bca:BCE_0270"/>
<dbReference type="HOGENOM" id="CLU_089696_1_2_9"/>
<dbReference type="Proteomes" id="UP000002527">
    <property type="component" value="Chromosome"/>
</dbReference>
<dbReference type="GO" id="GO:0005829">
    <property type="term" value="C:cytosol"/>
    <property type="evidence" value="ECO:0007669"/>
    <property type="project" value="TreeGrafter"/>
</dbReference>
<dbReference type="GO" id="GO:0008897">
    <property type="term" value="F:holo-[acyl-carrier-protein] synthase activity"/>
    <property type="evidence" value="ECO:0007669"/>
    <property type="project" value="UniProtKB-UniRule"/>
</dbReference>
<dbReference type="GO" id="GO:0000287">
    <property type="term" value="F:magnesium ion binding"/>
    <property type="evidence" value="ECO:0007669"/>
    <property type="project" value="UniProtKB-UniRule"/>
</dbReference>
<dbReference type="GO" id="GO:0006633">
    <property type="term" value="P:fatty acid biosynthetic process"/>
    <property type="evidence" value="ECO:0007669"/>
    <property type="project" value="UniProtKB-UniRule"/>
</dbReference>
<dbReference type="GO" id="GO:0019878">
    <property type="term" value="P:lysine biosynthetic process via aminoadipic acid"/>
    <property type="evidence" value="ECO:0007669"/>
    <property type="project" value="TreeGrafter"/>
</dbReference>
<dbReference type="Gene3D" id="3.90.470.20">
    <property type="entry name" value="4'-phosphopantetheinyl transferase domain"/>
    <property type="match status" value="1"/>
</dbReference>
<dbReference type="HAMAP" id="MF_00101">
    <property type="entry name" value="AcpS"/>
    <property type="match status" value="1"/>
</dbReference>
<dbReference type="InterPro" id="IPR008278">
    <property type="entry name" value="4-PPantetheinyl_Trfase_dom"/>
</dbReference>
<dbReference type="InterPro" id="IPR037143">
    <property type="entry name" value="4-PPantetheinyl_Trfase_dom_sf"/>
</dbReference>
<dbReference type="InterPro" id="IPR002582">
    <property type="entry name" value="ACPS"/>
</dbReference>
<dbReference type="InterPro" id="IPR050559">
    <property type="entry name" value="P-Pant_transferase_sf"/>
</dbReference>
<dbReference type="InterPro" id="IPR004568">
    <property type="entry name" value="Ppantetheine-prot_Trfase_dom"/>
</dbReference>
<dbReference type="NCBIfam" id="TIGR00516">
    <property type="entry name" value="acpS"/>
    <property type="match status" value="1"/>
</dbReference>
<dbReference type="NCBIfam" id="TIGR00556">
    <property type="entry name" value="pantethn_trn"/>
    <property type="match status" value="1"/>
</dbReference>
<dbReference type="PANTHER" id="PTHR12215:SF10">
    <property type="entry name" value="L-AMINOADIPATE-SEMIALDEHYDE DEHYDROGENASE-PHOSPHOPANTETHEINYL TRANSFERASE"/>
    <property type="match status" value="1"/>
</dbReference>
<dbReference type="PANTHER" id="PTHR12215">
    <property type="entry name" value="PHOSPHOPANTETHEINE TRANSFERASE"/>
    <property type="match status" value="1"/>
</dbReference>
<dbReference type="Pfam" id="PF01648">
    <property type="entry name" value="ACPS"/>
    <property type="match status" value="1"/>
</dbReference>
<dbReference type="SUPFAM" id="SSF56214">
    <property type="entry name" value="4'-phosphopantetheinyl transferase"/>
    <property type="match status" value="1"/>
</dbReference>
<comment type="function">
    <text evidence="1">Transfers the 4'-phosphopantetheine moiety from coenzyme A to a Ser of acyl-carrier-protein.</text>
</comment>
<comment type="catalytic activity">
    <reaction evidence="1">
        <text>apo-[ACP] + CoA = holo-[ACP] + adenosine 3',5'-bisphosphate + H(+)</text>
        <dbReference type="Rhea" id="RHEA:12068"/>
        <dbReference type="Rhea" id="RHEA-COMP:9685"/>
        <dbReference type="Rhea" id="RHEA-COMP:9690"/>
        <dbReference type="ChEBI" id="CHEBI:15378"/>
        <dbReference type="ChEBI" id="CHEBI:29999"/>
        <dbReference type="ChEBI" id="CHEBI:57287"/>
        <dbReference type="ChEBI" id="CHEBI:58343"/>
        <dbReference type="ChEBI" id="CHEBI:64479"/>
        <dbReference type="EC" id="2.7.8.7"/>
    </reaction>
</comment>
<comment type="cofactor">
    <cofactor evidence="1">
        <name>Mg(2+)</name>
        <dbReference type="ChEBI" id="CHEBI:18420"/>
    </cofactor>
</comment>
<comment type="subcellular location">
    <subcellularLocation>
        <location evidence="1">Cytoplasm</location>
    </subcellularLocation>
</comment>
<comment type="similarity">
    <text evidence="1">Belongs to the P-Pant transferase superfamily. AcpS family.</text>
</comment>
<accession>Q73ET8</accession>
<proteinExistence type="inferred from homology"/>